<name>UGPC_VIBCH</name>
<sequence length="372" mass="41124">MLDIKQLVKTYDNGHQAVKGVDLSIHQGEFIVLVGPSGCGKSSILRSIAGLESITSGEIHLAGRRVDNEKPANRDIAMVFQNYALYPHMSVYDNLAYGLKNRGVDKQTIAAKIAKVAKTLKIEEYLDRKPAKLSGGQRQRVAMGRAIVRDPQLFLFDEPLSNLDAALRAHMRLEIKKLQRELGVTSVYVTHDQVEAMTLADRIVVVKQGEIEQVGTPAEVYHQPASTFVASFIGSPAMNFLPASIKQGQLHIAGKHCYLPQFDAMSSENITLGIRPEHASLHPLTNAIELKLDIQVVEPLGPNQLVHGKIIGLESEQDFIAVTAEIPLDVHQTLPIWVALEQLHLFDQQGKRFVQSHRSCTQSSKVASTRQQ</sequence>
<keyword id="KW-0067">ATP-binding</keyword>
<keyword id="KW-0997">Cell inner membrane</keyword>
<keyword id="KW-1003">Cell membrane</keyword>
<keyword id="KW-0472">Membrane</keyword>
<keyword id="KW-0547">Nucleotide-binding</keyword>
<keyword id="KW-1185">Reference proteome</keyword>
<keyword id="KW-0762">Sugar transport</keyword>
<keyword id="KW-1278">Translocase</keyword>
<keyword id="KW-0813">Transport</keyword>
<feature type="chain" id="PRO_0000289786" description="sn-glycerol-3-phosphate import ATP-binding protein UgpC">
    <location>
        <begin position="1"/>
        <end position="372"/>
    </location>
</feature>
<feature type="domain" description="ABC transporter" evidence="1">
    <location>
        <begin position="2"/>
        <end position="233"/>
    </location>
</feature>
<feature type="binding site" evidence="1">
    <location>
        <begin position="35"/>
        <end position="42"/>
    </location>
    <ligand>
        <name>ATP</name>
        <dbReference type="ChEBI" id="CHEBI:30616"/>
    </ligand>
</feature>
<dbReference type="EC" id="7.6.2.10" evidence="1"/>
<dbReference type="EMBL" id="AE003852">
    <property type="protein sequence ID" value="AAF94706.1"/>
    <property type="status" value="ALT_INIT"/>
    <property type="molecule type" value="Genomic_DNA"/>
</dbReference>
<dbReference type="PIR" id="B82185">
    <property type="entry name" value="B82185"/>
</dbReference>
<dbReference type="RefSeq" id="NP_231192.1">
    <property type="nucleotide sequence ID" value="NC_002505.1"/>
</dbReference>
<dbReference type="SMR" id="Q9KRT4"/>
<dbReference type="STRING" id="243277.VC_1552"/>
<dbReference type="DNASU" id="2613931"/>
<dbReference type="EnsemblBacteria" id="AAF94706">
    <property type="protein sequence ID" value="AAF94706"/>
    <property type="gene ID" value="VC_1552"/>
</dbReference>
<dbReference type="KEGG" id="vch:VC_1552"/>
<dbReference type="PATRIC" id="fig|243277.26.peg.1481"/>
<dbReference type="eggNOG" id="COG3842">
    <property type="taxonomic scope" value="Bacteria"/>
</dbReference>
<dbReference type="HOGENOM" id="CLU_000604_1_1_6"/>
<dbReference type="Proteomes" id="UP000000584">
    <property type="component" value="Chromosome 1"/>
</dbReference>
<dbReference type="GO" id="GO:0055052">
    <property type="term" value="C:ATP-binding cassette (ABC) transporter complex, substrate-binding subunit-containing"/>
    <property type="evidence" value="ECO:0000318"/>
    <property type="project" value="GO_Central"/>
</dbReference>
<dbReference type="GO" id="GO:0015430">
    <property type="term" value="F:ABC-type glycerol-3-phosphate transporter activity"/>
    <property type="evidence" value="ECO:0007669"/>
    <property type="project" value="UniProtKB-EC"/>
</dbReference>
<dbReference type="GO" id="GO:0005524">
    <property type="term" value="F:ATP binding"/>
    <property type="evidence" value="ECO:0007669"/>
    <property type="project" value="UniProtKB-KW"/>
</dbReference>
<dbReference type="GO" id="GO:0016887">
    <property type="term" value="F:ATP hydrolysis activity"/>
    <property type="evidence" value="ECO:0007669"/>
    <property type="project" value="InterPro"/>
</dbReference>
<dbReference type="GO" id="GO:0008643">
    <property type="term" value="P:carbohydrate transport"/>
    <property type="evidence" value="ECO:0007669"/>
    <property type="project" value="InterPro"/>
</dbReference>
<dbReference type="GO" id="GO:0015794">
    <property type="term" value="P:glycerol-3-phosphate transmembrane transport"/>
    <property type="evidence" value="ECO:0000318"/>
    <property type="project" value="GO_Central"/>
</dbReference>
<dbReference type="GO" id="GO:0001407">
    <property type="term" value="P:glycerophosphodiester transmembrane transport"/>
    <property type="evidence" value="ECO:0000318"/>
    <property type="project" value="GO_Central"/>
</dbReference>
<dbReference type="CDD" id="cd03301">
    <property type="entry name" value="ABC_MalK_N"/>
    <property type="match status" value="1"/>
</dbReference>
<dbReference type="FunFam" id="3.40.50.300:FF:000042">
    <property type="entry name" value="Maltose/maltodextrin ABC transporter, ATP-binding protein"/>
    <property type="match status" value="1"/>
</dbReference>
<dbReference type="Gene3D" id="2.40.50.100">
    <property type="match status" value="1"/>
</dbReference>
<dbReference type="Gene3D" id="2.40.50.140">
    <property type="entry name" value="Nucleic acid-binding proteins"/>
    <property type="match status" value="1"/>
</dbReference>
<dbReference type="Gene3D" id="3.40.50.300">
    <property type="entry name" value="P-loop containing nucleotide triphosphate hydrolases"/>
    <property type="match status" value="1"/>
</dbReference>
<dbReference type="InterPro" id="IPR003593">
    <property type="entry name" value="AAA+_ATPase"/>
</dbReference>
<dbReference type="InterPro" id="IPR003439">
    <property type="entry name" value="ABC_transporter-like_ATP-bd"/>
</dbReference>
<dbReference type="InterPro" id="IPR017871">
    <property type="entry name" value="ABC_transporter-like_CS"/>
</dbReference>
<dbReference type="InterPro" id="IPR015855">
    <property type="entry name" value="ABC_transpr_MalK-like"/>
</dbReference>
<dbReference type="InterPro" id="IPR047641">
    <property type="entry name" value="ABC_transpr_MalK/UgpC-like"/>
</dbReference>
<dbReference type="InterPro" id="IPR008995">
    <property type="entry name" value="Mo/tungstate-bd_C_term_dom"/>
</dbReference>
<dbReference type="InterPro" id="IPR012340">
    <property type="entry name" value="NA-bd_OB-fold"/>
</dbReference>
<dbReference type="InterPro" id="IPR040582">
    <property type="entry name" value="OB_MalK-like"/>
</dbReference>
<dbReference type="InterPro" id="IPR027417">
    <property type="entry name" value="P-loop_NTPase"/>
</dbReference>
<dbReference type="NCBIfam" id="NF008653">
    <property type="entry name" value="PRK11650.1"/>
    <property type="match status" value="1"/>
</dbReference>
<dbReference type="PANTHER" id="PTHR43875">
    <property type="entry name" value="MALTODEXTRIN IMPORT ATP-BINDING PROTEIN MSMX"/>
    <property type="match status" value="1"/>
</dbReference>
<dbReference type="PANTHER" id="PTHR43875:SF12">
    <property type="entry name" value="SN-GLYCEROL-3-PHOSPHATE IMPORT ATP-BINDING PROTEIN UGPC"/>
    <property type="match status" value="1"/>
</dbReference>
<dbReference type="Pfam" id="PF00005">
    <property type="entry name" value="ABC_tran"/>
    <property type="match status" value="1"/>
</dbReference>
<dbReference type="Pfam" id="PF17912">
    <property type="entry name" value="OB_MalK"/>
    <property type="match status" value="1"/>
</dbReference>
<dbReference type="SMART" id="SM00382">
    <property type="entry name" value="AAA"/>
    <property type="match status" value="1"/>
</dbReference>
<dbReference type="SUPFAM" id="SSF50331">
    <property type="entry name" value="MOP-like"/>
    <property type="match status" value="1"/>
</dbReference>
<dbReference type="SUPFAM" id="SSF52540">
    <property type="entry name" value="P-loop containing nucleoside triphosphate hydrolases"/>
    <property type="match status" value="1"/>
</dbReference>
<dbReference type="PROSITE" id="PS00211">
    <property type="entry name" value="ABC_TRANSPORTER_1"/>
    <property type="match status" value="1"/>
</dbReference>
<dbReference type="PROSITE" id="PS50893">
    <property type="entry name" value="ABC_TRANSPORTER_2"/>
    <property type="match status" value="1"/>
</dbReference>
<dbReference type="PROSITE" id="PS51315">
    <property type="entry name" value="UGPC"/>
    <property type="match status" value="1"/>
</dbReference>
<protein>
    <recommendedName>
        <fullName evidence="1">sn-glycerol-3-phosphate import ATP-binding protein UgpC</fullName>
        <ecNumber evidence="1">7.6.2.10</ecNumber>
    </recommendedName>
</protein>
<gene>
    <name evidence="1" type="primary">ugpC</name>
    <name type="ordered locus">VC_1552</name>
</gene>
<proteinExistence type="inferred from homology"/>
<organism>
    <name type="scientific">Vibrio cholerae serotype O1 (strain ATCC 39315 / El Tor Inaba N16961)</name>
    <dbReference type="NCBI Taxonomy" id="243277"/>
    <lineage>
        <taxon>Bacteria</taxon>
        <taxon>Pseudomonadati</taxon>
        <taxon>Pseudomonadota</taxon>
        <taxon>Gammaproteobacteria</taxon>
        <taxon>Vibrionales</taxon>
        <taxon>Vibrionaceae</taxon>
        <taxon>Vibrio</taxon>
    </lineage>
</organism>
<comment type="function">
    <text evidence="1">Part of the ABC transporter complex UgpBAEC involved in sn-glycerol-3-phosphate (G3P) import. Responsible for energy coupling to the transport system.</text>
</comment>
<comment type="catalytic activity">
    <reaction evidence="1">
        <text>sn-glycerol 3-phosphate(out) + ATP + H2O = sn-glycerol 3-phosphate(in) + ADP + phosphate + H(+)</text>
        <dbReference type="Rhea" id="RHEA:21668"/>
        <dbReference type="ChEBI" id="CHEBI:15377"/>
        <dbReference type="ChEBI" id="CHEBI:15378"/>
        <dbReference type="ChEBI" id="CHEBI:30616"/>
        <dbReference type="ChEBI" id="CHEBI:43474"/>
        <dbReference type="ChEBI" id="CHEBI:57597"/>
        <dbReference type="ChEBI" id="CHEBI:456216"/>
        <dbReference type="EC" id="7.6.2.10"/>
    </reaction>
</comment>
<comment type="subunit">
    <text evidence="1">The complex is composed of two ATP-binding proteins (UgpC), two transmembrane proteins (UgpA and UgpE) and a solute-binding protein (UgpB).</text>
</comment>
<comment type="subcellular location">
    <subcellularLocation>
        <location evidence="1">Cell inner membrane</location>
        <topology evidence="1">Peripheral membrane protein</topology>
    </subcellularLocation>
</comment>
<comment type="similarity">
    <text evidence="1">Belongs to the ABC transporter superfamily. sn-glycerol-3-phosphate importer (TC 3.A.1.1.3) family.</text>
</comment>
<comment type="sequence caution" evidence="2">
    <conflict type="erroneous initiation">
        <sequence resource="EMBL-CDS" id="AAF94706"/>
    </conflict>
</comment>
<evidence type="ECO:0000255" key="1">
    <source>
        <dbReference type="HAMAP-Rule" id="MF_01727"/>
    </source>
</evidence>
<evidence type="ECO:0000305" key="2"/>
<accession>Q9KRT4</accession>
<reference key="1">
    <citation type="journal article" date="2000" name="Nature">
        <title>DNA sequence of both chromosomes of the cholera pathogen Vibrio cholerae.</title>
        <authorList>
            <person name="Heidelberg J.F."/>
            <person name="Eisen J.A."/>
            <person name="Nelson W.C."/>
            <person name="Clayton R.A."/>
            <person name="Gwinn M.L."/>
            <person name="Dodson R.J."/>
            <person name="Haft D.H."/>
            <person name="Hickey E.K."/>
            <person name="Peterson J.D."/>
            <person name="Umayam L.A."/>
            <person name="Gill S.R."/>
            <person name="Nelson K.E."/>
            <person name="Read T.D."/>
            <person name="Tettelin H."/>
            <person name="Richardson D.L."/>
            <person name="Ermolaeva M.D."/>
            <person name="Vamathevan J.J."/>
            <person name="Bass S."/>
            <person name="Qin H."/>
            <person name="Dragoi I."/>
            <person name="Sellers P."/>
            <person name="McDonald L.A."/>
            <person name="Utterback T.R."/>
            <person name="Fleischmann R.D."/>
            <person name="Nierman W.C."/>
            <person name="White O."/>
            <person name="Salzberg S.L."/>
            <person name="Smith H.O."/>
            <person name="Colwell R.R."/>
            <person name="Mekalanos J.J."/>
            <person name="Venter J.C."/>
            <person name="Fraser C.M."/>
        </authorList>
    </citation>
    <scope>NUCLEOTIDE SEQUENCE [LARGE SCALE GENOMIC DNA]</scope>
    <source>
        <strain>ATCC 39315 / El Tor Inaba N16961</strain>
    </source>
</reference>